<evidence type="ECO:0000255" key="1">
    <source>
        <dbReference type="HAMAP-Rule" id="MF_00133"/>
    </source>
</evidence>
<feature type="chain" id="PRO_0000098947" description="Tryptophan synthase beta chain">
    <location>
        <begin position="1"/>
        <end position="431"/>
    </location>
</feature>
<feature type="modified residue" description="N6-(pyridoxal phosphate)lysine" evidence="1">
    <location>
        <position position="109"/>
    </location>
</feature>
<accession>Q9RVT1</accession>
<reference key="1">
    <citation type="journal article" date="1999" name="Science">
        <title>Genome sequence of the radioresistant bacterium Deinococcus radiodurans R1.</title>
        <authorList>
            <person name="White O."/>
            <person name="Eisen J.A."/>
            <person name="Heidelberg J.F."/>
            <person name="Hickey E.K."/>
            <person name="Peterson J.D."/>
            <person name="Dodson R.J."/>
            <person name="Haft D.H."/>
            <person name="Gwinn M.L."/>
            <person name="Nelson W.C."/>
            <person name="Richardson D.L."/>
            <person name="Moffat K.S."/>
            <person name="Qin H."/>
            <person name="Jiang L."/>
            <person name="Pamphile W."/>
            <person name="Crosby M."/>
            <person name="Shen M."/>
            <person name="Vamathevan J.J."/>
            <person name="Lam P."/>
            <person name="McDonald L.A."/>
            <person name="Utterback T.R."/>
            <person name="Zalewski C."/>
            <person name="Makarova K.S."/>
            <person name="Aravind L."/>
            <person name="Daly M.J."/>
            <person name="Minton K.W."/>
            <person name="Fleischmann R.D."/>
            <person name="Ketchum K.A."/>
            <person name="Nelson K.E."/>
            <person name="Salzberg S.L."/>
            <person name="Smith H.O."/>
            <person name="Venter J.C."/>
            <person name="Fraser C.M."/>
        </authorList>
    </citation>
    <scope>NUCLEOTIDE SEQUENCE [LARGE SCALE GENOMIC DNA]</scope>
    <source>
        <strain>ATCC 13939 / DSM 20539 / JCM 16871 / CCUG 27074 / LMG 4051 / NBRC 15346 / NCIMB 9279 / VKM B-1422 / R1</strain>
    </source>
</reference>
<name>TRPB_DEIRA</name>
<organism>
    <name type="scientific">Deinococcus radiodurans (strain ATCC 13939 / DSM 20539 / JCM 16871 / CCUG 27074 / LMG 4051 / NBRC 15346 / NCIMB 9279 / VKM B-1422 / R1)</name>
    <dbReference type="NCBI Taxonomy" id="243230"/>
    <lineage>
        <taxon>Bacteria</taxon>
        <taxon>Thermotogati</taxon>
        <taxon>Deinococcota</taxon>
        <taxon>Deinococci</taxon>
        <taxon>Deinococcales</taxon>
        <taxon>Deinococcaceae</taxon>
        <taxon>Deinococcus</taxon>
    </lineage>
</organism>
<keyword id="KW-0028">Amino-acid biosynthesis</keyword>
<keyword id="KW-0057">Aromatic amino acid biosynthesis</keyword>
<keyword id="KW-0456">Lyase</keyword>
<keyword id="KW-0663">Pyridoxal phosphate</keyword>
<keyword id="KW-1185">Reference proteome</keyword>
<keyword id="KW-0822">Tryptophan biosynthesis</keyword>
<protein>
    <recommendedName>
        <fullName evidence="1">Tryptophan synthase beta chain</fullName>
        <ecNumber evidence="1">4.2.1.20</ecNumber>
    </recommendedName>
</protein>
<gene>
    <name evidence="1" type="primary">trpB</name>
    <name type="ordered locus">DR_0941</name>
</gene>
<proteinExistence type="inferred from homology"/>
<dbReference type="EC" id="4.2.1.20" evidence="1"/>
<dbReference type="EMBL" id="AE000513">
    <property type="protein sequence ID" value="AAF10518.1"/>
    <property type="molecule type" value="Genomic_DNA"/>
</dbReference>
<dbReference type="PIR" id="D75455">
    <property type="entry name" value="D75455"/>
</dbReference>
<dbReference type="RefSeq" id="NP_294665.1">
    <property type="nucleotide sequence ID" value="NC_001263.1"/>
</dbReference>
<dbReference type="SMR" id="Q9RVT1"/>
<dbReference type="FunCoup" id="Q9RVT1">
    <property type="interactions" value="447"/>
</dbReference>
<dbReference type="STRING" id="243230.DR_0941"/>
<dbReference type="PaxDb" id="243230-DR_0941"/>
<dbReference type="EnsemblBacteria" id="AAF10518">
    <property type="protein sequence ID" value="AAF10518"/>
    <property type="gene ID" value="DR_0941"/>
</dbReference>
<dbReference type="KEGG" id="dra:DR_0941"/>
<dbReference type="PATRIC" id="fig|243230.17.peg.1128"/>
<dbReference type="eggNOG" id="COG0133">
    <property type="taxonomic scope" value="Bacteria"/>
</dbReference>
<dbReference type="HOGENOM" id="CLU_016734_3_1_0"/>
<dbReference type="InParanoid" id="Q9RVT1"/>
<dbReference type="OrthoDB" id="9766131at2"/>
<dbReference type="UniPathway" id="UPA00035">
    <property type="reaction ID" value="UER00044"/>
</dbReference>
<dbReference type="Proteomes" id="UP000002524">
    <property type="component" value="Chromosome 1"/>
</dbReference>
<dbReference type="GO" id="GO:0005737">
    <property type="term" value="C:cytoplasm"/>
    <property type="evidence" value="ECO:0000318"/>
    <property type="project" value="GO_Central"/>
</dbReference>
<dbReference type="GO" id="GO:0004834">
    <property type="term" value="F:tryptophan synthase activity"/>
    <property type="evidence" value="ECO:0007669"/>
    <property type="project" value="UniProtKB-UniRule"/>
</dbReference>
<dbReference type="GO" id="GO:0000162">
    <property type="term" value="P:L-tryptophan biosynthetic process"/>
    <property type="evidence" value="ECO:0000318"/>
    <property type="project" value="GO_Central"/>
</dbReference>
<dbReference type="CDD" id="cd06446">
    <property type="entry name" value="Trp-synth_B"/>
    <property type="match status" value="1"/>
</dbReference>
<dbReference type="FunFam" id="3.40.50.1100:FF:000001">
    <property type="entry name" value="Tryptophan synthase beta chain"/>
    <property type="match status" value="1"/>
</dbReference>
<dbReference type="FunFam" id="3.40.50.1100:FF:000004">
    <property type="entry name" value="Tryptophan synthase beta chain"/>
    <property type="match status" value="1"/>
</dbReference>
<dbReference type="Gene3D" id="3.40.50.1100">
    <property type="match status" value="2"/>
</dbReference>
<dbReference type="HAMAP" id="MF_00133">
    <property type="entry name" value="Trp_synth_beta"/>
    <property type="match status" value="1"/>
</dbReference>
<dbReference type="InterPro" id="IPR006653">
    <property type="entry name" value="Trp_synth_b_CS"/>
</dbReference>
<dbReference type="InterPro" id="IPR006654">
    <property type="entry name" value="Trp_synth_beta"/>
</dbReference>
<dbReference type="InterPro" id="IPR023026">
    <property type="entry name" value="Trp_synth_beta/beta-like"/>
</dbReference>
<dbReference type="InterPro" id="IPR001926">
    <property type="entry name" value="TrpB-like_PALP"/>
</dbReference>
<dbReference type="InterPro" id="IPR036052">
    <property type="entry name" value="TrpB-like_PALP_sf"/>
</dbReference>
<dbReference type="NCBIfam" id="TIGR00263">
    <property type="entry name" value="trpB"/>
    <property type="match status" value="1"/>
</dbReference>
<dbReference type="PANTHER" id="PTHR48077:SF3">
    <property type="entry name" value="TRYPTOPHAN SYNTHASE"/>
    <property type="match status" value="1"/>
</dbReference>
<dbReference type="PANTHER" id="PTHR48077">
    <property type="entry name" value="TRYPTOPHAN SYNTHASE-RELATED"/>
    <property type="match status" value="1"/>
</dbReference>
<dbReference type="Pfam" id="PF00291">
    <property type="entry name" value="PALP"/>
    <property type="match status" value="1"/>
</dbReference>
<dbReference type="PIRSF" id="PIRSF001413">
    <property type="entry name" value="Trp_syn_beta"/>
    <property type="match status" value="1"/>
</dbReference>
<dbReference type="SUPFAM" id="SSF53686">
    <property type="entry name" value="Tryptophan synthase beta subunit-like PLP-dependent enzymes"/>
    <property type="match status" value="1"/>
</dbReference>
<dbReference type="PROSITE" id="PS00168">
    <property type="entry name" value="TRP_SYNTHASE_BETA"/>
    <property type="match status" value="1"/>
</dbReference>
<sequence>MSTAKLGCPKLRIMPLSIPSFPLPDARGRYGRFGGRYVPETLIPALDELEQAYEAAKQDPEFLDELDRLLREFVGRPNSLYLAERLTEHAGGAKIYLKREDQNFTGAHKINNCLAQALLAKRMGKQKIIAETGAGQHGVASATAAALLGLSCVVYMGEEDMRRQSLNVFRMQLLGAEVRPVTSGTATLKDATNEAIREWVTNVRDTFYILGSVVGPHPYPAMVRDFQSVIGEEVKVQLQEKEGRSVPDAIVACVGGGSNAIGIFAPFAYLPEGERPRLIGTEAAGHGVDTGMHAASVAWGRVGVLHGSMMYLMNDDEGQIVPPHSISAGLDYPGIGPEHCYYSVMGMAEYVPVTDAQALEGLQLLTRLEGIIPALESAHAISYAVQLARQMKPEEIVVVNLSGRGDKDVTEVMRLLEQSENKQAEGQEVKA</sequence>
<comment type="function">
    <text evidence="1">The beta subunit is responsible for the synthesis of L-tryptophan from indole and L-serine.</text>
</comment>
<comment type="catalytic activity">
    <reaction evidence="1">
        <text>(1S,2R)-1-C-(indol-3-yl)glycerol 3-phosphate + L-serine = D-glyceraldehyde 3-phosphate + L-tryptophan + H2O</text>
        <dbReference type="Rhea" id="RHEA:10532"/>
        <dbReference type="ChEBI" id="CHEBI:15377"/>
        <dbReference type="ChEBI" id="CHEBI:33384"/>
        <dbReference type="ChEBI" id="CHEBI:57912"/>
        <dbReference type="ChEBI" id="CHEBI:58866"/>
        <dbReference type="ChEBI" id="CHEBI:59776"/>
        <dbReference type="EC" id="4.2.1.20"/>
    </reaction>
</comment>
<comment type="cofactor">
    <cofactor evidence="1">
        <name>pyridoxal 5'-phosphate</name>
        <dbReference type="ChEBI" id="CHEBI:597326"/>
    </cofactor>
</comment>
<comment type="pathway">
    <text evidence="1">Amino-acid biosynthesis; L-tryptophan biosynthesis; L-tryptophan from chorismate: step 5/5.</text>
</comment>
<comment type="subunit">
    <text evidence="1">Tetramer of two alpha and two beta chains.</text>
</comment>
<comment type="similarity">
    <text evidence="1">Belongs to the TrpB family.</text>
</comment>